<accession>Q1BXQ7</accession>
<dbReference type="EC" id="2.7.1.35" evidence="1"/>
<dbReference type="EMBL" id="CP000378">
    <property type="protein sequence ID" value="ABF75598.1"/>
    <property type="molecule type" value="Genomic_DNA"/>
</dbReference>
<dbReference type="SMR" id="Q1BXQ7"/>
<dbReference type="HOGENOM" id="CLU_046496_3_0_4"/>
<dbReference type="UniPathway" id="UPA01068">
    <property type="reaction ID" value="UER00298"/>
</dbReference>
<dbReference type="GO" id="GO:0005829">
    <property type="term" value="C:cytosol"/>
    <property type="evidence" value="ECO:0007669"/>
    <property type="project" value="TreeGrafter"/>
</dbReference>
<dbReference type="GO" id="GO:0005524">
    <property type="term" value="F:ATP binding"/>
    <property type="evidence" value="ECO:0007669"/>
    <property type="project" value="UniProtKB-UniRule"/>
</dbReference>
<dbReference type="GO" id="GO:0000287">
    <property type="term" value="F:magnesium ion binding"/>
    <property type="evidence" value="ECO:0007669"/>
    <property type="project" value="UniProtKB-UniRule"/>
</dbReference>
<dbReference type="GO" id="GO:0008478">
    <property type="term" value="F:pyridoxal kinase activity"/>
    <property type="evidence" value="ECO:0007669"/>
    <property type="project" value="UniProtKB-UniRule"/>
</dbReference>
<dbReference type="GO" id="GO:0009443">
    <property type="term" value="P:pyridoxal 5'-phosphate salvage"/>
    <property type="evidence" value="ECO:0007669"/>
    <property type="project" value="UniProtKB-UniRule"/>
</dbReference>
<dbReference type="CDD" id="cd01173">
    <property type="entry name" value="pyridoxal_pyridoxamine_kinase"/>
    <property type="match status" value="1"/>
</dbReference>
<dbReference type="FunFam" id="3.40.1190.20:FF:000008">
    <property type="entry name" value="Pyridoxal kinase PdxY"/>
    <property type="match status" value="1"/>
</dbReference>
<dbReference type="Gene3D" id="3.40.1190.20">
    <property type="match status" value="1"/>
</dbReference>
<dbReference type="HAMAP" id="MF_01639">
    <property type="entry name" value="PdxY"/>
    <property type="match status" value="1"/>
</dbReference>
<dbReference type="InterPro" id="IPR013749">
    <property type="entry name" value="PM/HMP-P_kinase-1"/>
</dbReference>
<dbReference type="InterPro" id="IPR004625">
    <property type="entry name" value="PyrdxlKinase"/>
</dbReference>
<dbReference type="InterPro" id="IPR023685">
    <property type="entry name" value="Pyridoxal_kinase_PdxY"/>
</dbReference>
<dbReference type="InterPro" id="IPR029056">
    <property type="entry name" value="Ribokinase-like"/>
</dbReference>
<dbReference type="NCBIfam" id="NF004398">
    <property type="entry name" value="PRK05756.1"/>
    <property type="match status" value="1"/>
</dbReference>
<dbReference type="NCBIfam" id="TIGR00687">
    <property type="entry name" value="pyridox_kin"/>
    <property type="match status" value="1"/>
</dbReference>
<dbReference type="PANTHER" id="PTHR10534">
    <property type="entry name" value="PYRIDOXAL KINASE"/>
    <property type="match status" value="1"/>
</dbReference>
<dbReference type="PANTHER" id="PTHR10534:SF2">
    <property type="entry name" value="PYRIDOXAL KINASE"/>
    <property type="match status" value="1"/>
</dbReference>
<dbReference type="Pfam" id="PF08543">
    <property type="entry name" value="Phos_pyr_kin"/>
    <property type="match status" value="1"/>
</dbReference>
<dbReference type="SUPFAM" id="SSF53613">
    <property type="entry name" value="Ribokinase-like"/>
    <property type="match status" value="1"/>
</dbReference>
<organism>
    <name type="scientific">Burkholderia orbicola (strain AU 1054)</name>
    <dbReference type="NCBI Taxonomy" id="331271"/>
    <lineage>
        <taxon>Bacteria</taxon>
        <taxon>Pseudomonadati</taxon>
        <taxon>Pseudomonadota</taxon>
        <taxon>Betaproteobacteria</taxon>
        <taxon>Burkholderiales</taxon>
        <taxon>Burkholderiaceae</taxon>
        <taxon>Burkholderia</taxon>
        <taxon>Burkholderia cepacia complex</taxon>
        <taxon>Burkholderia orbicola</taxon>
    </lineage>
</organism>
<feature type="chain" id="PRO_0000269796" description="Pyridoxal kinase PdxY">
    <location>
        <begin position="1"/>
        <end position="286"/>
    </location>
</feature>
<feature type="binding site" evidence="1">
    <location>
        <position position="9"/>
    </location>
    <ligand>
        <name>substrate</name>
    </ligand>
</feature>
<feature type="binding site" evidence="1">
    <location>
        <begin position="44"/>
        <end position="45"/>
    </location>
    <ligand>
        <name>substrate</name>
    </ligand>
</feature>
<feature type="binding site" evidence="1">
    <location>
        <position position="111"/>
    </location>
    <ligand>
        <name>ATP</name>
        <dbReference type="ChEBI" id="CHEBI:30616"/>
    </ligand>
</feature>
<feature type="binding site" evidence="1">
    <location>
        <position position="147"/>
    </location>
    <ligand>
        <name>ATP</name>
        <dbReference type="ChEBI" id="CHEBI:30616"/>
    </ligand>
</feature>
<feature type="binding site" evidence="1">
    <location>
        <position position="180"/>
    </location>
    <ligand>
        <name>ATP</name>
        <dbReference type="ChEBI" id="CHEBI:30616"/>
    </ligand>
</feature>
<feature type="binding site" evidence="1">
    <location>
        <position position="221"/>
    </location>
    <ligand>
        <name>substrate</name>
    </ligand>
</feature>
<protein>
    <recommendedName>
        <fullName evidence="1">Pyridoxal kinase PdxY</fullName>
        <shortName evidence="1">PL kinase</shortName>
        <ecNumber evidence="1">2.7.1.35</ecNumber>
    </recommendedName>
</protein>
<keyword id="KW-0067">ATP-binding</keyword>
<keyword id="KW-0418">Kinase</keyword>
<keyword id="KW-0460">Magnesium</keyword>
<keyword id="KW-0547">Nucleotide-binding</keyword>
<keyword id="KW-0808">Transferase</keyword>
<comment type="function">
    <text evidence="1">Pyridoxal kinase involved in the salvage pathway of pyridoxal 5'-phosphate (PLP). Catalyzes the phosphorylation of pyridoxal to PLP.</text>
</comment>
<comment type="catalytic activity">
    <reaction evidence="1">
        <text>pyridoxal + ATP = pyridoxal 5'-phosphate + ADP + H(+)</text>
        <dbReference type="Rhea" id="RHEA:10224"/>
        <dbReference type="ChEBI" id="CHEBI:15378"/>
        <dbReference type="ChEBI" id="CHEBI:17310"/>
        <dbReference type="ChEBI" id="CHEBI:30616"/>
        <dbReference type="ChEBI" id="CHEBI:456216"/>
        <dbReference type="ChEBI" id="CHEBI:597326"/>
        <dbReference type="EC" id="2.7.1.35"/>
    </reaction>
</comment>
<comment type="cofactor">
    <cofactor evidence="1">
        <name>Mg(2+)</name>
        <dbReference type="ChEBI" id="CHEBI:18420"/>
    </cofactor>
</comment>
<comment type="pathway">
    <text evidence="1">Cofactor metabolism; pyridoxal 5'-phosphate salvage; pyridoxal 5'-phosphate from pyridoxal: step 1/1.</text>
</comment>
<comment type="subunit">
    <text evidence="1">Homodimer.</text>
</comment>
<comment type="similarity">
    <text evidence="1">Belongs to the pyridoxine kinase family. PdxY subfamily.</text>
</comment>
<reference key="1">
    <citation type="submission" date="2006-05" db="EMBL/GenBank/DDBJ databases">
        <title>Complete sequence of chromosome 1 of Burkholderia cenocepacia AU 1054.</title>
        <authorList>
            <consortium name="US DOE Joint Genome Institute"/>
            <person name="Copeland A."/>
            <person name="Lucas S."/>
            <person name="Lapidus A."/>
            <person name="Barry K."/>
            <person name="Detter J.C."/>
            <person name="Glavina del Rio T."/>
            <person name="Hammon N."/>
            <person name="Israni S."/>
            <person name="Dalin E."/>
            <person name="Tice H."/>
            <person name="Pitluck S."/>
            <person name="Chain P."/>
            <person name="Malfatti S."/>
            <person name="Shin M."/>
            <person name="Vergez L."/>
            <person name="Schmutz J."/>
            <person name="Larimer F."/>
            <person name="Land M."/>
            <person name="Hauser L."/>
            <person name="Kyrpides N."/>
            <person name="Lykidis A."/>
            <person name="LiPuma J.J."/>
            <person name="Konstantinidis K."/>
            <person name="Tiedje J.M."/>
            <person name="Richardson P."/>
        </authorList>
    </citation>
    <scope>NUCLEOTIDE SEQUENCE [LARGE SCALE GENOMIC DNA]</scope>
    <source>
        <strain>AU 1054</strain>
    </source>
</reference>
<proteinExistence type="inferred from homology"/>
<gene>
    <name evidence="1" type="primary">pdxY</name>
    <name type="ordered locus">Bcen_0688</name>
</gene>
<name>PDXY_BURO1</name>
<sequence length="286" mass="31222">MKNVLSIQSHVIYGHAGNSAAVFPMQRLGINVWPLNTVQLSNHMQYGHWAGSAIDAAKMEQLVDGIAAIGVLKRCDAVLSGFLGSPPQARAAVEIVRTVKAMNPNAWYFCDPAMGQTGGIRPEPGVEEFIVEEVPALADGMSPNHTELQKLAGRRIETVAEAVDACRALIRRGPQIILVKHLHDRNSPADRFNMLAVTETEAWIGQRPLYAFPRHPVGVGDLTSAIFVACRLRGDSVRAAFEHTLAAVHAVVKATYDARRYELELVAAQDEIARPSEWFGAWVTDA</sequence>
<evidence type="ECO:0000255" key="1">
    <source>
        <dbReference type="HAMAP-Rule" id="MF_01639"/>
    </source>
</evidence>